<evidence type="ECO:0000255" key="1">
    <source>
        <dbReference type="HAMAP-Rule" id="MF_00321"/>
    </source>
</evidence>
<protein>
    <recommendedName>
        <fullName evidence="1">Probable GTP-binding protein EngB</fullName>
    </recommendedName>
</protein>
<proteinExistence type="inferred from homology"/>
<dbReference type="EMBL" id="AE015924">
    <property type="protein sequence ID" value="AAQ65557.1"/>
    <property type="molecule type" value="Genomic_DNA"/>
</dbReference>
<dbReference type="RefSeq" id="WP_005873828.1">
    <property type="nucleotide sequence ID" value="NC_002950.2"/>
</dbReference>
<dbReference type="SMR" id="Q7MX68"/>
<dbReference type="STRING" id="242619.PG_0346"/>
<dbReference type="EnsemblBacteria" id="AAQ65557">
    <property type="protein sequence ID" value="AAQ65557"/>
    <property type="gene ID" value="PG_0346"/>
</dbReference>
<dbReference type="GeneID" id="29256786"/>
<dbReference type="KEGG" id="pgi:PG_0346"/>
<dbReference type="eggNOG" id="COG0218">
    <property type="taxonomic scope" value="Bacteria"/>
</dbReference>
<dbReference type="HOGENOM" id="CLU_033732_3_1_10"/>
<dbReference type="Proteomes" id="UP000000588">
    <property type="component" value="Chromosome"/>
</dbReference>
<dbReference type="GO" id="GO:0005525">
    <property type="term" value="F:GTP binding"/>
    <property type="evidence" value="ECO:0007669"/>
    <property type="project" value="UniProtKB-UniRule"/>
</dbReference>
<dbReference type="GO" id="GO:0046872">
    <property type="term" value="F:metal ion binding"/>
    <property type="evidence" value="ECO:0007669"/>
    <property type="project" value="UniProtKB-KW"/>
</dbReference>
<dbReference type="GO" id="GO:0000917">
    <property type="term" value="P:division septum assembly"/>
    <property type="evidence" value="ECO:0007669"/>
    <property type="project" value="UniProtKB-KW"/>
</dbReference>
<dbReference type="CDD" id="cd01876">
    <property type="entry name" value="YihA_EngB"/>
    <property type="match status" value="1"/>
</dbReference>
<dbReference type="FunFam" id="3.40.50.300:FF:000098">
    <property type="entry name" value="Probable GTP-binding protein EngB"/>
    <property type="match status" value="1"/>
</dbReference>
<dbReference type="Gene3D" id="3.40.50.300">
    <property type="entry name" value="P-loop containing nucleotide triphosphate hydrolases"/>
    <property type="match status" value="1"/>
</dbReference>
<dbReference type="HAMAP" id="MF_00321">
    <property type="entry name" value="GTPase_EngB"/>
    <property type="match status" value="1"/>
</dbReference>
<dbReference type="InterPro" id="IPR030393">
    <property type="entry name" value="G_ENGB_dom"/>
</dbReference>
<dbReference type="InterPro" id="IPR006073">
    <property type="entry name" value="GTP-bd"/>
</dbReference>
<dbReference type="InterPro" id="IPR019987">
    <property type="entry name" value="GTP-bd_ribosome_bio_YsxC"/>
</dbReference>
<dbReference type="InterPro" id="IPR027417">
    <property type="entry name" value="P-loop_NTPase"/>
</dbReference>
<dbReference type="NCBIfam" id="TIGR03598">
    <property type="entry name" value="GTPase_YsxC"/>
    <property type="match status" value="1"/>
</dbReference>
<dbReference type="PANTHER" id="PTHR11649:SF13">
    <property type="entry name" value="ENGB-TYPE G DOMAIN-CONTAINING PROTEIN"/>
    <property type="match status" value="1"/>
</dbReference>
<dbReference type="PANTHER" id="PTHR11649">
    <property type="entry name" value="MSS1/TRME-RELATED GTP-BINDING PROTEIN"/>
    <property type="match status" value="1"/>
</dbReference>
<dbReference type="Pfam" id="PF01926">
    <property type="entry name" value="MMR_HSR1"/>
    <property type="match status" value="1"/>
</dbReference>
<dbReference type="SUPFAM" id="SSF52540">
    <property type="entry name" value="P-loop containing nucleoside triphosphate hydrolases"/>
    <property type="match status" value="1"/>
</dbReference>
<dbReference type="PROSITE" id="PS51706">
    <property type="entry name" value="G_ENGB"/>
    <property type="match status" value="1"/>
</dbReference>
<gene>
    <name evidence="1" type="primary">engB</name>
    <name type="ordered locus">PG_0346</name>
</gene>
<sequence>MEIKKAAFVISNTDVRKCPDTRLPEYAFIGRSNVGKSSLINMLTGQKGLAMTSQKPGKTQLINHFIIDDSWYLVDLPGYGYARLGASNRESLRRIIETYILCREQLSSLFVLIDCRHEPQKIDLEFLQWLGENGIPFSIVFTKADKLSFSRLKENTEAYKQKLLETWEELPPVFITSSEKKTGKEELLDYIDSINQELATK</sequence>
<reference key="1">
    <citation type="journal article" date="2003" name="J. Bacteriol.">
        <title>Complete genome sequence of the oral pathogenic bacterium Porphyromonas gingivalis strain W83.</title>
        <authorList>
            <person name="Nelson K.E."/>
            <person name="Fleischmann R.D."/>
            <person name="DeBoy R.T."/>
            <person name="Paulsen I.T."/>
            <person name="Fouts D.E."/>
            <person name="Eisen J.A."/>
            <person name="Daugherty S.C."/>
            <person name="Dodson R.J."/>
            <person name="Durkin A.S."/>
            <person name="Gwinn M.L."/>
            <person name="Haft D.H."/>
            <person name="Kolonay J.F."/>
            <person name="Nelson W.C."/>
            <person name="Mason T.M."/>
            <person name="Tallon L."/>
            <person name="Gray J."/>
            <person name="Granger D."/>
            <person name="Tettelin H."/>
            <person name="Dong H."/>
            <person name="Galvin J.L."/>
            <person name="Duncan M.J."/>
            <person name="Dewhirst F.E."/>
            <person name="Fraser C.M."/>
        </authorList>
    </citation>
    <scope>NUCLEOTIDE SEQUENCE [LARGE SCALE GENOMIC DNA]</scope>
    <source>
        <strain>ATCC BAA-308 / W83</strain>
    </source>
</reference>
<organism>
    <name type="scientific">Porphyromonas gingivalis (strain ATCC BAA-308 / W83)</name>
    <dbReference type="NCBI Taxonomy" id="242619"/>
    <lineage>
        <taxon>Bacteria</taxon>
        <taxon>Pseudomonadati</taxon>
        <taxon>Bacteroidota</taxon>
        <taxon>Bacteroidia</taxon>
        <taxon>Bacteroidales</taxon>
        <taxon>Porphyromonadaceae</taxon>
        <taxon>Porphyromonas</taxon>
    </lineage>
</organism>
<name>ENGB_PORGI</name>
<feature type="chain" id="PRO_0000266916" description="Probable GTP-binding protein EngB">
    <location>
        <begin position="1"/>
        <end position="201"/>
    </location>
</feature>
<feature type="domain" description="EngB-type G" evidence="1">
    <location>
        <begin position="22"/>
        <end position="197"/>
    </location>
</feature>
<feature type="binding site" evidence="1">
    <location>
        <begin position="30"/>
        <end position="37"/>
    </location>
    <ligand>
        <name>GTP</name>
        <dbReference type="ChEBI" id="CHEBI:37565"/>
    </ligand>
</feature>
<feature type="binding site" evidence="1">
    <location>
        <position position="37"/>
    </location>
    <ligand>
        <name>Mg(2+)</name>
        <dbReference type="ChEBI" id="CHEBI:18420"/>
    </ligand>
</feature>
<feature type="binding site" evidence="1">
    <location>
        <begin position="57"/>
        <end position="61"/>
    </location>
    <ligand>
        <name>GTP</name>
        <dbReference type="ChEBI" id="CHEBI:37565"/>
    </ligand>
</feature>
<feature type="binding site" evidence="1">
    <location>
        <position position="59"/>
    </location>
    <ligand>
        <name>Mg(2+)</name>
        <dbReference type="ChEBI" id="CHEBI:18420"/>
    </ligand>
</feature>
<feature type="binding site" evidence="1">
    <location>
        <begin position="75"/>
        <end position="78"/>
    </location>
    <ligand>
        <name>GTP</name>
        <dbReference type="ChEBI" id="CHEBI:37565"/>
    </ligand>
</feature>
<feature type="binding site" evidence="1">
    <location>
        <begin position="142"/>
        <end position="145"/>
    </location>
    <ligand>
        <name>GTP</name>
        <dbReference type="ChEBI" id="CHEBI:37565"/>
    </ligand>
</feature>
<feature type="binding site" evidence="1">
    <location>
        <begin position="173"/>
        <end position="178"/>
    </location>
    <ligand>
        <name>GTP</name>
        <dbReference type="ChEBI" id="CHEBI:37565"/>
    </ligand>
</feature>
<accession>Q7MX68</accession>
<keyword id="KW-0131">Cell cycle</keyword>
<keyword id="KW-0132">Cell division</keyword>
<keyword id="KW-0342">GTP-binding</keyword>
<keyword id="KW-0460">Magnesium</keyword>
<keyword id="KW-0479">Metal-binding</keyword>
<keyword id="KW-0547">Nucleotide-binding</keyword>
<keyword id="KW-1185">Reference proteome</keyword>
<keyword id="KW-0717">Septation</keyword>
<comment type="function">
    <text evidence="1">Necessary for normal cell division and for the maintenance of normal septation.</text>
</comment>
<comment type="cofactor">
    <cofactor evidence="1">
        <name>Mg(2+)</name>
        <dbReference type="ChEBI" id="CHEBI:18420"/>
    </cofactor>
</comment>
<comment type="similarity">
    <text evidence="1">Belongs to the TRAFAC class TrmE-Era-EngA-EngB-Septin-like GTPase superfamily. EngB GTPase family.</text>
</comment>